<evidence type="ECO:0000255" key="1"/>
<evidence type="ECO:0000269" key="2">
    <source>
    </source>
</evidence>
<evidence type="ECO:0000269" key="3">
    <source>
    </source>
</evidence>
<evidence type="ECO:0000269" key="4">
    <source>
    </source>
</evidence>
<evidence type="ECO:0000269" key="5">
    <source>
    </source>
</evidence>
<evidence type="ECO:0000269" key="6">
    <source>
    </source>
</evidence>
<evidence type="ECO:0000269" key="7">
    <source>
    </source>
</evidence>
<evidence type="ECO:0000303" key="8">
    <source>
    </source>
</evidence>
<evidence type="ECO:0000305" key="9"/>
<evidence type="ECO:0000305" key="10">
    <source>
    </source>
</evidence>
<evidence type="ECO:0000305" key="11">
    <source>
    </source>
</evidence>
<dbReference type="EMBL" id="U18997">
    <property type="protein sequence ID" value="AAA58047.1"/>
    <property type="status" value="ALT_FRAME"/>
    <property type="molecule type" value="Genomic_DNA"/>
</dbReference>
<dbReference type="EMBL" id="U18997">
    <property type="protein sequence ID" value="AAA58048.1"/>
    <property type="status" value="ALT_FRAME"/>
    <property type="molecule type" value="Genomic_DNA"/>
</dbReference>
<dbReference type="EMBL" id="U18997">
    <property type="protein sequence ID" value="AAA58049.1"/>
    <property type="status" value="ALT_FRAME"/>
    <property type="molecule type" value="Genomic_DNA"/>
</dbReference>
<dbReference type="EMBL" id="U00096">
    <property type="protein sequence ID" value="AAT48173.1"/>
    <property type="molecule type" value="Genomic_DNA"/>
</dbReference>
<dbReference type="EMBL" id="AP009048">
    <property type="protein sequence ID" value="BAE77288.1"/>
    <property type="molecule type" value="Genomic_DNA"/>
</dbReference>
<dbReference type="EMBL" id="X57166">
    <property type="status" value="NOT_ANNOTATED_CDS"/>
    <property type="molecule type" value="Genomic_DNA"/>
</dbReference>
<dbReference type="PIR" id="G65116">
    <property type="entry name" value="G65116"/>
</dbReference>
<dbReference type="PIR" id="H65116">
    <property type="entry name" value="H65116"/>
</dbReference>
<dbReference type="RefSeq" id="WP_001253618.1">
    <property type="nucleotide sequence ID" value="NZ_SSZK01000034.1"/>
</dbReference>
<dbReference type="RefSeq" id="YP_026208.1">
    <property type="nucleotide sequence ID" value="NC_000913.3"/>
</dbReference>
<dbReference type="SMR" id="P46474"/>
<dbReference type="BioGRID" id="4261747">
    <property type="interactions" value="9"/>
</dbReference>
<dbReference type="DIP" id="DIP-12299N"/>
<dbReference type="FunCoup" id="P46474">
    <property type="interactions" value="167"/>
</dbReference>
<dbReference type="IntAct" id="P46474">
    <property type="interactions" value="2"/>
</dbReference>
<dbReference type="STRING" id="511145.b4472"/>
<dbReference type="TCDB" id="9.B.121.2.4">
    <property type="family name" value="the asma (asma) family"/>
</dbReference>
<dbReference type="jPOST" id="P46474"/>
<dbReference type="PaxDb" id="511145-b4472"/>
<dbReference type="EnsemblBacteria" id="AAT48173">
    <property type="protein sequence ID" value="AAT48173"/>
    <property type="gene ID" value="b4472"/>
</dbReference>
<dbReference type="GeneID" id="2847740"/>
<dbReference type="KEGG" id="ecj:JW5542"/>
<dbReference type="KEGG" id="eco:b4472"/>
<dbReference type="KEGG" id="ecoc:C3026_17650"/>
<dbReference type="PATRIC" id="fig|1411691.4.peg.3483"/>
<dbReference type="EchoBASE" id="EB2678"/>
<dbReference type="eggNOG" id="COG3164">
    <property type="taxonomic scope" value="Bacteria"/>
</dbReference>
<dbReference type="HOGENOM" id="CLU_003522_0_0_6"/>
<dbReference type="InParanoid" id="P46474"/>
<dbReference type="OMA" id="DYMDLRV"/>
<dbReference type="OrthoDB" id="9762238at2"/>
<dbReference type="PhylomeDB" id="P46474"/>
<dbReference type="BioCyc" id="EcoCyc:G7690-MONOMER"/>
<dbReference type="PRO" id="PR:P46474"/>
<dbReference type="Proteomes" id="UP000000625">
    <property type="component" value="Chromosome"/>
</dbReference>
<dbReference type="GO" id="GO:0005886">
    <property type="term" value="C:plasma membrane"/>
    <property type="evidence" value="ECO:0000255"/>
    <property type="project" value="EcoCyc"/>
</dbReference>
<dbReference type="GO" id="GO:0015914">
    <property type="term" value="P:phospholipid transport"/>
    <property type="evidence" value="ECO:0000269"/>
    <property type="project" value="EcoCyc"/>
</dbReference>
<dbReference type="InterPro" id="IPR011836">
    <property type="entry name" value="CHP02099"/>
</dbReference>
<dbReference type="InterPro" id="IPR025263">
    <property type="entry name" value="DUF3971"/>
</dbReference>
<dbReference type="NCBIfam" id="NF008148">
    <property type="entry name" value="PRK10899.1"/>
    <property type="match status" value="1"/>
</dbReference>
<dbReference type="NCBIfam" id="TIGR02099">
    <property type="entry name" value="YhdP family protein"/>
    <property type="match status" value="1"/>
</dbReference>
<dbReference type="PANTHER" id="PTHR38690:SF1">
    <property type="entry name" value="PROTEASE"/>
    <property type="match status" value="1"/>
</dbReference>
<dbReference type="PANTHER" id="PTHR38690">
    <property type="entry name" value="PROTEASE-RELATED"/>
    <property type="match status" value="1"/>
</dbReference>
<dbReference type="Pfam" id="PF13116">
    <property type="entry name" value="YhdP"/>
    <property type="match status" value="1"/>
</dbReference>
<proteinExistence type="evidence at protein level"/>
<comment type="function">
    <text evidence="2 3 4 5 6 7">Involved in outer membrane lipid homeostasis (PubMed:33046656, PubMed:34781743, PubMed:35226662, PubMed:38913742, PubMed:39638236). Likely transports phospholipids between the inner membrane and the outer membrane (PubMed:33046656, PubMed:34781743, PubMed:35226662, PubMed:38913742, PubMed:39638236). It would provide a bridge-like structure that protects phospholipids as they travel across the periplasm (PubMed:34781743, PubMed:39638236). The phosphate-containing molecules are captured along the length of a hydrophobic groove that is continuous along all but the extreme N-terminus of the protein (PubMed:39638236). It also appears to control, directly or indirectly, levels of cyclic enterobacterial common antigen (cyclic ECA), a soluble cyclic ECA molecule present in the periplasm (PubMed:30087168).</text>
</comment>
<comment type="function">
    <text evidence="4 6">TamB, YdbH and YhdP are redundant, but not equivalent, in performing an essential function for growth and maintaining lipid homeostasis in the outer membrane (PubMed:34781743). The transport functions of TamB and YhdP could be differentiated according to the fatty acid saturation state of the phospholipids, with TamB transporting more unsaturated phospholipids and YhdP more saturated phospholipids (PubMed:38913742). Any of these three proteins is sufficient for growth (PubMed:34781743).</text>
</comment>
<comment type="subcellular location">
    <subcellularLocation>
        <location evidence="7">Cell inner membrane</location>
        <topology evidence="7">Single-pass membrane protein</topology>
        <orientation evidence="7">Periplasmic side</orientation>
    </subcellularLocation>
    <text evidence="7">Forms a periplasm spanning bridge (PubMed:39638236). A periplasmic localization is essential for function and stability, while the N-terminal transmembrane region is required for YhdP to be fully functional (PubMed:39638236).</text>
</comment>
<comment type="domain">
    <text evidence="7">Forms long, thin, rod-type structures predicted to consist of stacked beta strands (PubMed:39638236). Contains essential helical regions at the N-and C-termini, which may embed into the inner and outer membranes respectively, reinforcing the envelope spanning nature of YhdP (PubMed:39638236). The inner membrane-interacting regions, particularly the P-helix, are required for YhdP stability (PubMed:39638236). The C-terminal helices, particularly C-helix_1, are required for function, potentially in anchoring the protein to the outer membrane (PubMed:39638236).</text>
</comment>
<comment type="disruption phenotype">
    <text evidence="2 3 4 5">The single mutant does not exhibit growth defects but it shows a slight increase in outer membrane permeability (PubMed:34781743). Deletion of the gene leads to increased sensitivity to detergents and antibiotics such as sodium dodecyl sulfate (SDS) and vancomycin (PubMed:30087168). The deletion decreases cyclic enterobacterial common antigen (cyclic ECA) levels, causing changes in outer membrane permeability (PubMed:30087168). Deletion of the gene in the mlaA* mutant (which carries a dominant negative mutation that reverses the normal function of the MlaA protein) delays cell death by slowing the flow of phospholipids to the outer membrane (PubMed:33046656). The tamB-yhdP double mutant shows defects in outer membrane lipid homeostasis and sensitivity to bile salts and various antibiotics such as vancomycin (PubMed:34781743, PubMed:35226662). The loss of tamB and yhdP severely compromises the integrity of the cell envelope, and causes lysis and alterations to cellular morphology (PubMed:34781743, PubMed:35226662). The double mutant results in a more visible rounding of the cell leading to increased cell width, decreased cell length, and a significant decrease in cell surface area (PubMed:35226662). The absence of tamB and yhdP also leads to excess amounts of outer membrane vesicles (OMVs) that are rich in lipopolysaccharides, presumably to compensate for the lack of proper phospholipid transport to the outer membrane and to maintain outer membrane integrity (PubMed:35226662). Deletion of tamB, ydbH and yhdP is lethal (PubMed:34781743, PubMed:35226662).</text>
</comment>
<comment type="sequence caution" evidence="9">
    <conflict type="frameshift">
        <sequence resource="EMBL-CDS" id="AAA58047"/>
    </conflict>
    <text>Produces three separate ORFs (yhdP, yhdQ and yhdR).</text>
</comment>
<comment type="sequence caution" evidence="9">
    <conflict type="frameshift">
        <sequence resource="EMBL-CDS" id="AAA58048"/>
    </conflict>
    <text>Produces three separate ORFs (yhdP, yhdQ and yhdR).</text>
</comment>
<comment type="sequence caution" evidence="9">
    <conflict type="frameshift">
        <sequence resource="EMBL-CDS" id="AAA58049"/>
    </conflict>
    <text>Produces three separate ORFs (yhdP, yhdQ and yhdR).</text>
</comment>
<keyword id="KW-0997">Cell inner membrane</keyword>
<keyword id="KW-1003">Cell membrane</keyword>
<keyword id="KW-0445">Lipid transport</keyword>
<keyword id="KW-0472">Membrane</keyword>
<keyword id="KW-1185">Reference proteome</keyword>
<keyword id="KW-0812">Transmembrane</keyword>
<keyword id="KW-1133">Transmembrane helix</keyword>
<keyword id="KW-0813">Transport</keyword>
<accession>P46474</accession>
<accession>P46475</accession>
<accession>P46476</accession>
<accession>P76676</accession>
<accession>Q2M8W8</accession>
<accession>Q6BF41</accession>
<reference key="1">
    <citation type="journal article" date="1997" name="Science">
        <title>The complete genome sequence of Escherichia coli K-12.</title>
        <authorList>
            <person name="Blattner F.R."/>
            <person name="Plunkett G. III"/>
            <person name="Bloch C.A."/>
            <person name="Perna N.T."/>
            <person name="Burland V."/>
            <person name="Riley M."/>
            <person name="Collado-Vides J."/>
            <person name="Glasner J.D."/>
            <person name="Rode C.K."/>
            <person name="Mayhew G.F."/>
            <person name="Gregor J."/>
            <person name="Davis N.W."/>
            <person name="Kirkpatrick H.A."/>
            <person name="Goeden M.A."/>
            <person name="Rose D.J."/>
            <person name="Mau B."/>
            <person name="Shao Y."/>
        </authorList>
    </citation>
    <scope>NUCLEOTIDE SEQUENCE [LARGE SCALE GENOMIC DNA]</scope>
    <source>
        <strain>K12 / MG1655 / ATCC 47076</strain>
    </source>
</reference>
<reference key="2">
    <citation type="journal article" date="2006" name="Nucleic Acids Res.">
        <title>Escherichia coli K-12: a cooperatively developed annotation snapshot -- 2005.</title>
        <authorList>
            <person name="Riley M."/>
            <person name="Abe T."/>
            <person name="Arnaud M.B."/>
            <person name="Berlyn M.K.B."/>
            <person name="Blattner F.R."/>
            <person name="Chaudhuri R.R."/>
            <person name="Glasner J.D."/>
            <person name="Horiuchi T."/>
            <person name="Keseler I.M."/>
            <person name="Kosuge T."/>
            <person name="Mori H."/>
            <person name="Perna N.T."/>
            <person name="Plunkett G. III"/>
            <person name="Rudd K.E."/>
            <person name="Serres M.H."/>
            <person name="Thomas G.H."/>
            <person name="Thomson N.R."/>
            <person name="Wishart D."/>
            <person name="Wanner B.L."/>
        </authorList>
    </citation>
    <scope>SEQUENCE REVISION</scope>
</reference>
<reference key="3">
    <citation type="journal article" date="2006" name="Mol. Syst. Biol.">
        <title>Highly accurate genome sequences of Escherichia coli K-12 strains MG1655 and W3110.</title>
        <authorList>
            <person name="Hayashi K."/>
            <person name="Morooka N."/>
            <person name="Yamamoto Y."/>
            <person name="Fujita K."/>
            <person name="Isono K."/>
            <person name="Choi S."/>
            <person name="Ohtsubo E."/>
            <person name="Baba T."/>
            <person name="Wanner B.L."/>
            <person name="Mori H."/>
            <person name="Horiuchi T."/>
        </authorList>
    </citation>
    <scope>NUCLEOTIDE SEQUENCE [LARGE SCALE GENOMIC DNA]</scope>
    <source>
        <strain>K12 / W3110 / ATCC 27325 / DSM 5911</strain>
    </source>
</reference>
<reference key="4">
    <citation type="journal article" date="1991" name="Gene">
        <title>Sequence of the downstream flanking region of the shape-determining genes mreBCD of Escherichia coli.</title>
        <authorList>
            <person name="Wachi M."/>
            <person name="Doi M."/>
            <person name="Ueda T."/>
            <person name="Ueki M."/>
            <person name="Tsuritani K."/>
            <person name="Nagai K."/>
            <person name="Matsuhashi M."/>
        </authorList>
    </citation>
    <scope>NUCLEOTIDE SEQUENCE [GENOMIC DNA] OF 1-50</scope>
    <source>
        <strain>K12</strain>
    </source>
</reference>
<reference key="5">
    <citation type="journal article" date="2018" name="MBio">
        <title>Cyclic Enterobacterial Common Antigen Maintains the Outer Membrane Permeability Barrier of Escherichia coli in a Manner Controlled by YhdP.</title>
        <authorList>
            <person name="Mitchell A.M."/>
            <person name="Srikumar T."/>
            <person name="Silhavy T.J."/>
        </authorList>
    </citation>
    <scope>FUNCTION</scope>
    <scope>DISRUPTION PHENOTYPE</scope>
    <source>
        <strain>K12 / MG1655 / ATCC 47076</strain>
    </source>
</reference>
<reference key="6">
    <citation type="journal article" date="2020" name="Proc. Natl. Acad. Sci. U.S.A.">
        <title>The inner membrane protein YhdP modulates the rate of anterograde phospholipid flow in Escherichia coli.</title>
        <authorList>
            <person name="Grimm J."/>
            <person name="Shi H."/>
            <person name="Wang W."/>
            <person name="Mitchell A.M."/>
            <person name="Wingreen N.S."/>
            <person name="Huang K.C."/>
            <person name="Silhavy T.J."/>
        </authorList>
    </citation>
    <scope>FUNCTION</scope>
    <scope>DISRUPTION PHENOTYPE</scope>
</reference>
<reference key="7">
    <citation type="journal article" date="2021" name="MBio">
        <title>YhdP, TamB, and YdbH Are Redundant but Essential for Growth and Lipid Homeostasis of the Gram-Negative Outer Membrane.</title>
        <authorList>
            <person name="Ruiz N."/>
            <person name="Davis R.M."/>
            <person name="Kumar S."/>
        </authorList>
    </citation>
    <scope>FUNCTION</scope>
    <scope>DISRUPTION PHENOTYPE</scope>
    <source>
        <strain>K12 / MG1655 / ATCC 47076</strain>
    </source>
</reference>
<reference key="8">
    <citation type="journal article" date="2022" name="PLoS Genet.">
        <title>Absence of YhdP, TamB, and YdbH leads to defects in glycerophospholipid transport and cell morphology in Gram-negative bacteria.</title>
        <authorList>
            <person name="Douglass M.V."/>
            <person name="McLean A.B."/>
            <person name="Trent M.S."/>
        </authorList>
    </citation>
    <scope>FUNCTION</scope>
    <scope>DISRUPTION PHENOTYPE</scope>
    <source>
        <strain>K12</strain>
    </source>
</reference>
<reference key="9">
    <citation type="journal article" date="2024" name="PLoS Genet.">
        <title>Genetic evidence for functional diversification of gram-negative intermembrane phospholipid transporters.</title>
        <authorList>
            <person name="Rai A.K."/>
            <person name="Sawasato K."/>
            <person name="Bennett H.C."/>
            <person name="Kozlova A."/>
            <person name="Sparagna G.C."/>
            <person name="Bogdanov M."/>
            <person name="Mitchell A.M."/>
        </authorList>
    </citation>
    <scope>FUNCTION</scope>
</reference>
<reference key="10">
    <citation type="journal article" date="2025" name="J. Mol. Biol.">
        <title>Phospholipid Transport Across the Bacterial Periplasm Through the Envelope-spanning Bridge YhdP.</title>
        <authorList>
            <person name="Cooper B.F."/>
            <person name="Clark R."/>
            <person name="Kudhail A."/>
            <person name="Dunn D."/>
            <person name="Tian Q."/>
            <person name="Bhabha G."/>
            <person name="Ekiert D.C."/>
            <person name="Khalid S."/>
            <person name="Isom G.L."/>
        </authorList>
    </citation>
    <scope>FUNCTION</scope>
    <scope>SUBCELLULAR LOCATION</scope>
    <scope>TOPOLOGY</scope>
    <scope>DOMAIN</scope>
    <scope>ELECTRON MICROSCOPY</scope>
    <scope>MOLECULAR DYNAMICS SIMULATIONS</scope>
</reference>
<gene>
    <name type="primary">yhdP</name>
    <name type="synonym">yhdQ</name>
    <name type="synonym">yhdR</name>
    <name type="ordered locus">b4472</name>
    <name type="ordered locus">JW5542</name>
</gene>
<feature type="chain" id="PRO_0000013923" description="Intermembrane phospholipid transporter YhdP">
    <location>
        <begin position="1"/>
        <end position="1266"/>
    </location>
</feature>
<feature type="topological domain" description="Cytoplasmic" evidence="10 11">
    <location>
        <begin position="1"/>
        <end position="5"/>
    </location>
</feature>
<feature type="transmembrane region" description="Helical" evidence="1">
    <location>
        <begin position="6"/>
        <end position="26"/>
    </location>
</feature>
<feature type="topological domain" description="Periplasmic" evidence="7 10">
    <location>
        <begin position="27"/>
        <end position="1266"/>
    </location>
</feature>
<feature type="region of interest" description="P-helix" evidence="11">
    <location>
        <begin position="94"/>
        <end position="103"/>
    </location>
</feature>
<feature type="region of interest" description="C-helix_2" evidence="11">
    <location>
        <begin position="1121"/>
        <end position="1144"/>
    </location>
</feature>
<feature type="region of interest" description="C-helix_1" evidence="11">
    <location>
        <begin position="1203"/>
        <end position="1237"/>
    </location>
</feature>
<feature type="sequence conflict" description="In Ref. 1; AAA58048." evidence="9" ref="1">
    <original>G</original>
    <variation>A</variation>
    <location>
        <position position="351"/>
    </location>
</feature>
<feature type="sequence conflict" description="In Ref. 1; AAA58048." evidence="9" ref="1">
    <original>P</original>
    <variation>R</variation>
    <location>
        <position position="354"/>
    </location>
</feature>
<protein>
    <recommendedName>
        <fullName evidence="8">Intermembrane phospholipid transporter YhdP</fullName>
    </recommendedName>
    <alternativeName>
        <fullName evidence="9">Phospholipid transport protein YhdP</fullName>
    </alternativeName>
</protein>
<sequence>MRRLPGILLLTGAALVVIAALLVSGLRIALPHLDAWRPEILNKIESATGMPVEASQLSASWQNFGPTLEAHDIRAELKDGGEFSVKRVTLALDVWQSLLHMRWQFRDLTFWQLRFRTNTPITSGGSDDSLEASHISDLFLRQFDHFDLRDSEVSFLTPSGQRAELAIPQLTWLNDPRRHRAEGLVSLSSLTGQHGVMQVRMDLRDDEGLLSNGRVWLQADDIDLKPWLGKWMQDNIALETAQFSLEGWMTIDKGDVTGGDVWLKQGGASWLGEKQTHTLSVDNLTAHITRENPGWQFSIPDTRITMDGKPWPSGALTLAWIPEQDVGGKDNKRSDELRIRASNLELAGLEGIRPLAAKLSPALGDVWRSTQPSGKINTLALDIPLQAADKTRFQASWSDLAWKQWKLLPGAEHFSGTLSGSVENGLLTASMKQAKMPYETVFRAPLEIADGQATISWLNNNKGFQLDGRNIDVKAKAVHARGGFRYLQPANDEPWLGILAGISTDDGSQAWRYFPENLMGKDLVDYLSGAIQGGEADNATLVYGGNPQLFPYKHNEGQFEVLVPLRNAKFAFQPDWPALTNLDIELDFINDGLWMKTDGVNLGGVRASNLTAVIPDYSKEKLLIDADIKGPGKAVGPYFDETPLKDSLGATLQELQLDGDVNARLHLDIPLNGELVTAKGEVTLRNNSLFIKPLDSTLKNLSGKFSFINSDLQSEPLTASWFNQPLNVDFSTKEGAKAYQVAVNLNGNWQPAKTGVLPEAVNEALSGSVAWDGKVGIDLPYHAGATYNIELNGDLKNVSSHLPSPLAKPAGEPLAVNVKVDGNLNSFELTGQAGADNHFNSRWLLGQKLTLDRAIWAADSKTLPPLPEQSGVELNMPPMNGAEWLALFQKGAAESVGGAASFPQHITLRTPMLSLGNQQWNNLSIVSQPTANGTLVEAQGREINATLAMRNNAPWLANIKYLYYNPSVAKTRGDSTPSSPFPTTERINFRGWPDAQIRCTECWFWGQKFGRIDSDITISGDTLTLTNGLIDTGFSRLTADGEWVNNPGNERTSLKGKLRGQKIDAAAEFFGVTTPIRQSSFNVDYDLHWRKAPWQPDEATLNGIIHTQLGKGEITEINTGHAGQLLRLLSVDALMRKLRFDFRDTFGEGFYFDSIRSTAWIKDGVMHTDDTLVDGLEADIAMKGSVNLVRRDLNMEAVVAPEISATVGVAAAFAVNPIVGAAVFAASKVLGPLWSKVSILRYHISGPLDDPQINEVLRQPRKEKAQ</sequence>
<name>YHDP_ECOLI</name>
<organism>
    <name type="scientific">Escherichia coli (strain K12)</name>
    <dbReference type="NCBI Taxonomy" id="83333"/>
    <lineage>
        <taxon>Bacteria</taxon>
        <taxon>Pseudomonadati</taxon>
        <taxon>Pseudomonadota</taxon>
        <taxon>Gammaproteobacteria</taxon>
        <taxon>Enterobacterales</taxon>
        <taxon>Enterobacteriaceae</taxon>
        <taxon>Escherichia</taxon>
    </lineage>
</organism>